<proteinExistence type="inferred from homology"/>
<accession>Q87X13</accession>
<comment type="function">
    <text evidence="1">Together with the chaperonin GroEL, plays an essential role in assisting protein folding. The GroEL-GroES system forms a nano-cage that allows encapsulation of the non-native substrate proteins and provides a physical environment optimized to promote and accelerate protein folding. GroES binds to the apical surface of the GroEL ring, thereby capping the opening of the GroEL channel.</text>
</comment>
<comment type="subunit">
    <text evidence="1">Heptamer of 7 subunits arranged in a ring. Interacts with the chaperonin GroEL.</text>
</comment>
<comment type="subcellular location">
    <subcellularLocation>
        <location evidence="1">Cytoplasm</location>
    </subcellularLocation>
</comment>
<comment type="similarity">
    <text evidence="1">Belongs to the GroES chaperonin family.</text>
</comment>
<name>CH10_PSESM</name>
<dbReference type="EMBL" id="AE016853">
    <property type="protein sequence ID" value="AAO57827.1"/>
    <property type="molecule type" value="Genomic_DNA"/>
</dbReference>
<dbReference type="RefSeq" id="NP_794132.1">
    <property type="nucleotide sequence ID" value="NC_004578.1"/>
</dbReference>
<dbReference type="RefSeq" id="WP_003304675.1">
    <property type="nucleotide sequence ID" value="NC_004578.1"/>
</dbReference>
<dbReference type="SMR" id="Q87X13"/>
<dbReference type="STRING" id="223283.PSPTO_4377"/>
<dbReference type="KEGG" id="pst:PSPTO_4377"/>
<dbReference type="PATRIC" id="fig|223283.9.peg.4492"/>
<dbReference type="eggNOG" id="COG0234">
    <property type="taxonomic scope" value="Bacteria"/>
</dbReference>
<dbReference type="HOGENOM" id="CLU_132825_2_0_6"/>
<dbReference type="OrthoDB" id="9806791at2"/>
<dbReference type="PhylomeDB" id="Q87X13"/>
<dbReference type="Proteomes" id="UP000002515">
    <property type="component" value="Chromosome"/>
</dbReference>
<dbReference type="GO" id="GO:0005737">
    <property type="term" value="C:cytoplasm"/>
    <property type="evidence" value="ECO:0007669"/>
    <property type="project" value="UniProtKB-SubCell"/>
</dbReference>
<dbReference type="GO" id="GO:0005524">
    <property type="term" value="F:ATP binding"/>
    <property type="evidence" value="ECO:0007669"/>
    <property type="project" value="InterPro"/>
</dbReference>
<dbReference type="GO" id="GO:0046872">
    <property type="term" value="F:metal ion binding"/>
    <property type="evidence" value="ECO:0007669"/>
    <property type="project" value="TreeGrafter"/>
</dbReference>
<dbReference type="GO" id="GO:0044183">
    <property type="term" value="F:protein folding chaperone"/>
    <property type="evidence" value="ECO:0007669"/>
    <property type="project" value="InterPro"/>
</dbReference>
<dbReference type="GO" id="GO:0051087">
    <property type="term" value="F:protein-folding chaperone binding"/>
    <property type="evidence" value="ECO:0007669"/>
    <property type="project" value="TreeGrafter"/>
</dbReference>
<dbReference type="GO" id="GO:0051082">
    <property type="term" value="F:unfolded protein binding"/>
    <property type="evidence" value="ECO:0007669"/>
    <property type="project" value="TreeGrafter"/>
</dbReference>
<dbReference type="GO" id="GO:0051085">
    <property type="term" value="P:chaperone cofactor-dependent protein refolding"/>
    <property type="evidence" value="ECO:0007669"/>
    <property type="project" value="TreeGrafter"/>
</dbReference>
<dbReference type="CDD" id="cd00320">
    <property type="entry name" value="cpn10"/>
    <property type="match status" value="1"/>
</dbReference>
<dbReference type="FunFam" id="2.30.33.40:FF:000001">
    <property type="entry name" value="10 kDa chaperonin"/>
    <property type="match status" value="1"/>
</dbReference>
<dbReference type="Gene3D" id="2.30.33.40">
    <property type="entry name" value="GroES chaperonin"/>
    <property type="match status" value="1"/>
</dbReference>
<dbReference type="HAMAP" id="MF_00580">
    <property type="entry name" value="CH10"/>
    <property type="match status" value="1"/>
</dbReference>
<dbReference type="InterPro" id="IPR020818">
    <property type="entry name" value="Chaperonin_GroES"/>
</dbReference>
<dbReference type="InterPro" id="IPR037124">
    <property type="entry name" value="Chaperonin_GroES_sf"/>
</dbReference>
<dbReference type="InterPro" id="IPR018369">
    <property type="entry name" value="Chaprnonin_Cpn10_CS"/>
</dbReference>
<dbReference type="InterPro" id="IPR011032">
    <property type="entry name" value="GroES-like_sf"/>
</dbReference>
<dbReference type="NCBIfam" id="NF001526">
    <property type="entry name" value="PRK00364.1-1"/>
    <property type="match status" value="1"/>
</dbReference>
<dbReference type="NCBIfam" id="NF001527">
    <property type="entry name" value="PRK00364.1-2"/>
    <property type="match status" value="1"/>
</dbReference>
<dbReference type="NCBIfam" id="NF001531">
    <property type="entry name" value="PRK00364.2-2"/>
    <property type="match status" value="1"/>
</dbReference>
<dbReference type="NCBIfam" id="NF001533">
    <property type="entry name" value="PRK00364.2-4"/>
    <property type="match status" value="1"/>
</dbReference>
<dbReference type="PANTHER" id="PTHR10772">
    <property type="entry name" value="10 KDA HEAT SHOCK PROTEIN"/>
    <property type="match status" value="1"/>
</dbReference>
<dbReference type="PANTHER" id="PTHR10772:SF58">
    <property type="entry name" value="CO-CHAPERONIN GROES"/>
    <property type="match status" value="1"/>
</dbReference>
<dbReference type="Pfam" id="PF00166">
    <property type="entry name" value="Cpn10"/>
    <property type="match status" value="1"/>
</dbReference>
<dbReference type="PRINTS" id="PR00297">
    <property type="entry name" value="CHAPERONIN10"/>
</dbReference>
<dbReference type="SMART" id="SM00883">
    <property type="entry name" value="Cpn10"/>
    <property type="match status" value="1"/>
</dbReference>
<dbReference type="SUPFAM" id="SSF50129">
    <property type="entry name" value="GroES-like"/>
    <property type="match status" value="1"/>
</dbReference>
<dbReference type="PROSITE" id="PS00681">
    <property type="entry name" value="CHAPERONINS_CPN10"/>
    <property type="match status" value="1"/>
</dbReference>
<gene>
    <name evidence="1" type="primary">groES</name>
    <name evidence="1" type="synonym">groS</name>
    <name type="ordered locus">PSPTO_4377</name>
</gene>
<reference key="1">
    <citation type="journal article" date="2003" name="Proc. Natl. Acad. Sci. U.S.A.">
        <title>The complete genome sequence of the Arabidopsis and tomato pathogen Pseudomonas syringae pv. tomato DC3000.</title>
        <authorList>
            <person name="Buell C.R."/>
            <person name="Joardar V."/>
            <person name="Lindeberg M."/>
            <person name="Selengut J."/>
            <person name="Paulsen I.T."/>
            <person name="Gwinn M.L."/>
            <person name="Dodson R.J."/>
            <person name="DeBoy R.T."/>
            <person name="Durkin A.S."/>
            <person name="Kolonay J.F."/>
            <person name="Madupu R."/>
            <person name="Daugherty S.C."/>
            <person name="Brinkac L.M."/>
            <person name="Beanan M.J."/>
            <person name="Haft D.H."/>
            <person name="Nelson W.C."/>
            <person name="Davidsen T.M."/>
            <person name="Zafar N."/>
            <person name="Zhou L."/>
            <person name="Liu J."/>
            <person name="Yuan Q."/>
            <person name="Khouri H.M."/>
            <person name="Fedorova N.B."/>
            <person name="Tran B."/>
            <person name="Russell D."/>
            <person name="Berry K.J."/>
            <person name="Utterback T.R."/>
            <person name="Van Aken S.E."/>
            <person name="Feldblyum T.V."/>
            <person name="D'Ascenzo M."/>
            <person name="Deng W.-L."/>
            <person name="Ramos A.R."/>
            <person name="Alfano J.R."/>
            <person name="Cartinhour S."/>
            <person name="Chatterjee A.K."/>
            <person name="Delaney T.P."/>
            <person name="Lazarowitz S.G."/>
            <person name="Martin G.B."/>
            <person name="Schneider D.J."/>
            <person name="Tang X."/>
            <person name="Bender C.L."/>
            <person name="White O."/>
            <person name="Fraser C.M."/>
            <person name="Collmer A."/>
        </authorList>
    </citation>
    <scope>NUCLEOTIDE SEQUENCE [LARGE SCALE GENOMIC DNA]</scope>
    <source>
        <strain>ATCC BAA-871 / DC3000</strain>
    </source>
</reference>
<protein>
    <recommendedName>
        <fullName evidence="1">Co-chaperonin GroES</fullName>
    </recommendedName>
    <alternativeName>
        <fullName evidence="1">10 kDa chaperonin</fullName>
    </alternativeName>
    <alternativeName>
        <fullName evidence="1">Chaperonin-10</fullName>
        <shortName evidence="1">Cpn10</shortName>
    </alternativeName>
</protein>
<organism>
    <name type="scientific">Pseudomonas syringae pv. tomato (strain ATCC BAA-871 / DC3000)</name>
    <dbReference type="NCBI Taxonomy" id="223283"/>
    <lineage>
        <taxon>Bacteria</taxon>
        <taxon>Pseudomonadati</taxon>
        <taxon>Pseudomonadota</taxon>
        <taxon>Gammaproteobacteria</taxon>
        <taxon>Pseudomonadales</taxon>
        <taxon>Pseudomonadaceae</taxon>
        <taxon>Pseudomonas</taxon>
    </lineage>
</organism>
<evidence type="ECO:0000255" key="1">
    <source>
        <dbReference type="HAMAP-Rule" id="MF_00580"/>
    </source>
</evidence>
<keyword id="KW-0143">Chaperone</keyword>
<keyword id="KW-0963">Cytoplasm</keyword>
<keyword id="KW-1185">Reference proteome</keyword>
<feature type="chain" id="PRO_0000174809" description="Co-chaperonin GroES">
    <location>
        <begin position="1"/>
        <end position="97"/>
    </location>
</feature>
<sequence>MKLRPLHDRVVIRRSEEETKTAGGIVLPGSAAEKPNRGEIVAVGTGRVLDNGEVRALAVKVGDKVVFGPYSGSNTVKVDGEDLLVMSENEILAVVEG</sequence>